<accession>P0A3W6</accession>
<accession>P05358</accession>
<accession>P09782</accession>
<geneLocation type="plasmid">
    <name>pTiA6</name>
</geneLocation>
<evidence type="ECO:0000255" key="1"/>
<evidence type="ECO:0000269" key="2">
    <source>
    </source>
</evidence>
<evidence type="ECO:0000305" key="3"/>
<comment type="function">
    <text>Is essential for the biogenesis of the T-pilus, which is required for virulence and T-DNA transfer to plant cells. When is associated with virB7, might function as a nucleation center for recruitment of VirB proteins during assembly of the T-DNA transfer machine.</text>
</comment>
<comment type="subunit">
    <text evidence="2">Heterodimer of virB7 and virB9; disulfide-linked.</text>
</comment>
<comment type="subcellular location">
    <subcellularLocation>
        <location>Cell membrane</location>
        <topology>Peripheral membrane protein</topology>
    </subcellularLocation>
</comment>
<comment type="similarity">
    <text evidence="3">Belongs to the TrbG/VirB9 family.</text>
</comment>
<gene>
    <name type="primary">virB9</name>
</gene>
<feature type="signal peptide" evidence="1">
    <location>
        <begin position="1"/>
        <end position="21"/>
    </location>
</feature>
<feature type="chain" id="PRO_0000022674" description="Protein virB9">
    <location>
        <begin position="22"/>
        <end position="293"/>
    </location>
</feature>
<feature type="disulfide bond" description="Interchain (with C-24 in virB7)" evidence="2">
    <location>
        <position position="262"/>
    </location>
</feature>
<feature type="mutagenesis site" description="No virB7-virB9 complex formation." evidence="2">
    <original>C</original>
    <variation>S</variation>
    <location>
        <position position="262"/>
    </location>
</feature>
<organism>
    <name type="scientific">Rhizobium radiobacter</name>
    <name type="common">Agrobacterium tumefaciens</name>
    <name type="synonym">Agrobacterium radiobacter</name>
    <dbReference type="NCBI Taxonomy" id="358"/>
    <lineage>
        <taxon>Bacteria</taxon>
        <taxon>Pseudomonadati</taxon>
        <taxon>Pseudomonadota</taxon>
        <taxon>Alphaproteobacteria</taxon>
        <taxon>Hyphomicrobiales</taxon>
        <taxon>Rhizobiaceae</taxon>
        <taxon>Rhizobium/Agrobacterium group</taxon>
        <taxon>Agrobacterium</taxon>
        <taxon>Agrobacterium tumefaciens complex</taxon>
    </lineage>
</organism>
<keyword id="KW-1003">Cell membrane</keyword>
<keyword id="KW-0192">Crown gall tumor</keyword>
<keyword id="KW-1015">Disulfide bond</keyword>
<keyword id="KW-0472">Membrane</keyword>
<keyword id="KW-0614">Plasmid</keyword>
<keyword id="KW-0732">Signal</keyword>
<keyword id="KW-0843">Virulence</keyword>
<reference key="1">
    <citation type="journal article" date="1988" name="J. Biol. Chem.">
        <title>Characterization of the virB operon from an Agrobacterium tumefaciens Ti plasmid.</title>
        <authorList>
            <person name="Ward J.E."/>
            <person name="Akiyoshi D.E."/>
            <person name="Regier D."/>
            <person name="Datta A."/>
            <person name="Gordon M.P."/>
            <person name="Nester E.W."/>
        </authorList>
    </citation>
    <scope>NUCLEOTIDE SEQUENCE [GENOMIC DNA]</scope>
</reference>
<reference key="2">
    <citation type="journal article" date="1990" name="J. Biol. Chem.">
        <authorList>
            <person name="Ward J.E."/>
            <person name="Akiyoshi D.E."/>
            <person name="Regier D."/>
            <person name="Datta A."/>
            <person name="Gordon M.P."/>
            <person name="Nester E.W."/>
        </authorList>
    </citation>
    <scope>ERRATUM OF PUBMED:3281947</scope>
    <scope>SEQUENCE REVISION</scope>
</reference>
<reference key="3">
    <citation type="journal article" date="1996" name="Proc. Natl. Acad. Sci. U.S.A.">
        <title>Agrobacterium tumefaciens VirB7 and VirB9 form a disulfide-linked protein complex.</title>
        <authorList>
            <person name="Anderson L.B."/>
            <person name="Hertzel A.V."/>
            <person name="Das A."/>
        </authorList>
    </citation>
    <scope>DISULFIDE BOND</scope>
    <scope>MUTAGENESIS OF CYS-262</scope>
</reference>
<protein>
    <recommendedName>
        <fullName>Protein virB9</fullName>
    </recommendedName>
</protein>
<sequence>MTRKALFILACLFAAATGAEAEDTPMAGKLDPRMRYLAYNPDQVVRLSTAVGATLVVTFATNETVTSVAVSNSKDLAALPRGNYLFFKASQVLTPQPVIVLTASDSGMRRYVFSISSKTLSHLDKEQPDLYYSVQFAYPADDAAARRREAQQRAVVDRLHAEAQYQRKAEDLLDQPVTALGATDSNWHYVAQGDRSLLPLEVFDNGFTTVFHFPGNVRIPSIYTINPDGKEAVANYSVKGSDVEISSVSRGWRLRDGHTVLCIWNAAYDPVGQRPQTGTVRPDVKRVLKGAKG</sequence>
<dbReference type="EMBL" id="J03216">
    <property type="protein sequence ID" value="AAA88654.1"/>
    <property type="molecule type" value="Genomic_DNA"/>
</dbReference>
<dbReference type="EMBL" id="AF242881">
    <property type="protein sequence ID" value="AAF77169.1"/>
    <property type="molecule type" value="Genomic_DNA"/>
</dbReference>
<dbReference type="PIR" id="S00785">
    <property type="entry name" value="B9AG55"/>
</dbReference>
<dbReference type="RefSeq" id="NP_059807.1">
    <property type="nucleotide sequence ID" value="NC_002377.1"/>
</dbReference>
<dbReference type="RefSeq" id="WP_010892495.1">
    <property type="nucleotide sequence ID" value="NZ_QSNU01000012.1"/>
</dbReference>
<dbReference type="SMR" id="P0A3W6"/>
<dbReference type="IntAct" id="P0A3W6">
    <property type="interactions" value="1"/>
</dbReference>
<dbReference type="TCDB" id="3.A.7.1.1">
    <property type="family name" value="the type iv (conjugal dna-protein transfer or virb) secretory pathway (ivsp) family"/>
</dbReference>
<dbReference type="OrthoDB" id="7390264at2"/>
<dbReference type="GO" id="GO:0005886">
    <property type="term" value="C:plasma membrane"/>
    <property type="evidence" value="ECO:0007669"/>
    <property type="project" value="UniProtKB-SubCell"/>
</dbReference>
<dbReference type="CDD" id="cd06911">
    <property type="entry name" value="VirB9_CagX_TrbG"/>
    <property type="match status" value="1"/>
</dbReference>
<dbReference type="Gene3D" id="2.60.40.2500">
    <property type="match status" value="1"/>
</dbReference>
<dbReference type="InterPro" id="IPR010258">
    <property type="entry name" value="Conjugal_tfr_TrbG/VirB9/CagX"/>
</dbReference>
<dbReference type="InterPro" id="IPR014148">
    <property type="entry name" value="VirB9"/>
</dbReference>
<dbReference type="InterPro" id="IPR033645">
    <property type="entry name" value="VirB9/CagX/TrbG_C"/>
</dbReference>
<dbReference type="InterPro" id="IPR038161">
    <property type="entry name" value="VirB9/CagX/TrbG_C_sf"/>
</dbReference>
<dbReference type="NCBIfam" id="NF010435">
    <property type="entry name" value="PRK13861.1"/>
    <property type="match status" value="1"/>
</dbReference>
<dbReference type="NCBIfam" id="TIGR02781">
    <property type="entry name" value="VirB9"/>
    <property type="match status" value="1"/>
</dbReference>
<dbReference type="Pfam" id="PF03524">
    <property type="entry name" value="CagX"/>
    <property type="match status" value="1"/>
</dbReference>
<proteinExistence type="evidence at protein level"/>
<name>VIRB9_RHIRD</name>